<gene>
    <name evidence="1" type="primary">nuoB1</name>
    <name type="ordered locus">Nmul_A1014</name>
</gene>
<sequence length="221" mass="24683">MRWSLSKPSDKPSGPATPGSSIIRDNGFEEDGRRSVLLTRLQDLVAWGRKNSVWPYNFGLSCCYVEMATSFTSKYDLARFGSEVIRASPRQADLIVISGTVFIKMAPVLQRLYDQMLEPRWVISMGSCANSGGMYDIYSVVQGVDRFLPVDVYVPGCPPRPDAFMQGLNLLQDAIGKEKRPLSWVIGPQGIERPAEESQRDLKRSGRMCATTLRSPDEVQK</sequence>
<feature type="chain" id="PRO_0000376292" description="NADH-quinone oxidoreductase subunit B 1">
    <location>
        <begin position="1"/>
        <end position="221"/>
    </location>
</feature>
<feature type="region of interest" description="Disordered" evidence="2">
    <location>
        <begin position="1"/>
        <end position="25"/>
    </location>
</feature>
<feature type="region of interest" description="Disordered" evidence="2">
    <location>
        <begin position="195"/>
        <end position="221"/>
    </location>
</feature>
<feature type="compositionally biased region" description="Basic and acidic residues" evidence="2">
    <location>
        <begin position="195"/>
        <end position="204"/>
    </location>
</feature>
<feature type="binding site" evidence="1">
    <location>
        <position position="62"/>
    </location>
    <ligand>
        <name>[4Fe-4S] cluster</name>
        <dbReference type="ChEBI" id="CHEBI:49883"/>
    </ligand>
</feature>
<feature type="binding site" evidence="1">
    <location>
        <position position="63"/>
    </location>
    <ligand>
        <name>[4Fe-4S] cluster</name>
        <dbReference type="ChEBI" id="CHEBI:49883"/>
    </ligand>
</feature>
<feature type="binding site" evidence="1">
    <location>
        <position position="128"/>
    </location>
    <ligand>
        <name>[4Fe-4S] cluster</name>
        <dbReference type="ChEBI" id="CHEBI:49883"/>
    </ligand>
</feature>
<feature type="binding site" evidence="1">
    <location>
        <position position="157"/>
    </location>
    <ligand>
        <name>[4Fe-4S] cluster</name>
        <dbReference type="ChEBI" id="CHEBI:49883"/>
    </ligand>
</feature>
<accession>Q2YAA4</accession>
<proteinExistence type="inferred from homology"/>
<dbReference type="EC" id="7.1.1.-" evidence="1"/>
<dbReference type="EMBL" id="CP000103">
    <property type="protein sequence ID" value="ABB74317.1"/>
    <property type="molecule type" value="Genomic_DNA"/>
</dbReference>
<dbReference type="SMR" id="Q2YAA4"/>
<dbReference type="STRING" id="323848.Nmul_A1014"/>
<dbReference type="KEGG" id="nmu:Nmul_A1014"/>
<dbReference type="eggNOG" id="COG0377">
    <property type="taxonomic scope" value="Bacteria"/>
</dbReference>
<dbReference type="HOGENOM" id="CLU_055737_7_3_4"/>
<dbReference type="Proteomes" id="UP000002718">
    <property type="component" value="Chromosome"/>
</dbReference>
<dbReference type="GO" id="GO:0005886">
    <property type="term" value="C:plasma membrane"/>
    <property type="evidence" value="ECO:0007669"/>
    <property type="project" value="UniProtKB-SubCell"/>
</dbReference>
<dbReference type="GO" id="GO:0045271">
    <property type="term" value="C:respiratory chain complex I"/>
    <property type="evidence" value="ECO:0007669"/>
    <property type="project" value="TreeGrafter"/>
</dbReference>
<dbReference type="GO" id="GO:0051539">
    <property type="term" value="F:4 iron, 4 sulfur cluster binding"/>
    <property type="evidence" value="ECO:0007669"/>
    <property type="project" value="UniProtKB-KW"/>
</dbReference>
<dbReference type="GO" id="GO:0005506">
    <property type="term" value="F:iron ion binding"/>
    <property type="evidence" value="ECO:0007669"/>
    <property type="project" value="UniProtKB-UniRule"/>
</dbReference>
<dbReference type="GO" id="GO:0008137">
    <property type="term" value="F:NADH dehydrogenase (ubiquinone) activity"/>
    <property type="evidence" value="ECO:0007669"/>
    <property type="project" value="InterPro"/>
</dbReference>
<dbReference type="GO" id="GO:0050136">
    <property type="term" value="F:NADH:ubiquinone reductase (non-electrogenic) activity"/>
    <property type="evidence" value="ECO:0007669"/>
    <property type="project" value="UniProtKB-UniRule"/>
</dbReference>
<dbReference type="GO" id="GO:0048038">
    <property type="term" value="F:quinone binding"/>
    <property type="evidence" value="ECO:0007669"/>
    <property type="project" value="UniProtKB-KW"/>
</dbReference>
<dbReference type="GO" id="GO:0009060">
    <property type="term" value="P:aerobic respiration"/>
    <property type="evidence" value="ECO:0007669"/>
    <property type="project" value="TreeGrafter"/>
</dbReference>
<dbReference type="GO" id="GO:0015990">
    <property type="term" value="P:electron transport coupled proton transport"/>
    <property type="evidence" value="ECO:0007669"/>
    <property type="project" value="TreeGrafter"/>
</dbReference>
<dbReference type="FunFam" id="3.40.50.12280:FF:000002">
    <property type="entry name" value="NADH-quinone oxidoreductase subunit B"/>
    <property type="match status" value="1"/>
</dbReference>
<dbReference type="Gene3D" id="3.40.50.12280">
    <property type="match status" value="1"/>
</dbReference>
<dbReference type="HAMAP" id="MF_01356">
    <property type="entry name" value="NDH1_NuoB"/>
    <property type="match status" value="1"/>
</dbReference>
<dbReference type="InterPro" id="IPR006137">
    <property type="entry name" value="NADH_UbQ_OxRdtase-like_20kDa"/>
</dbReference>
<dbReference type="InterPro" id="IPR006138">
    <property type="entry name" value="NADH_UQ_OxRdtase_20Kd_su"/>
</dbReference>
<dbReference type="NCBIfam" id="TIGR01957">
    <property type="entry name" value="nuoB_fam"/>
    <property type="match status" value="1"/>
</dbReference>
<dbReference type="NCBIfam" id="NF005012">
    <property type="entry name" value="PRK06411.1"/>
    <property type="match status" value="1"/>
</dbReference>
<dbReference type="PANTHER" id="PTHR11995">
    <property type="entry name" value="NADH DEHYDROGENASE"/>
    <property type="match status" value="1"/>
</dbReference>
<dbReference type="PANTHER" id="PTHR11995:SF14">
    <property type="entry name" value="NADH DEHYDROGENASE [UBIQUINONE] IRON-SULFUR PROTEIN 7, MITOCHONDRIAL"/>
    <property type="match status" value="1"/>
</dbReference>
<dbReference type="Pfam" id="PF01058">
    <property type="entry name" value="Oxidored_q6"/>
    <property type="match status" value="1"/>
</dbReference>
<dbReference type="SUPFAM" id="SSF56770">
    <property type="entry name" value="HydA/Nqo6-like"/>
    <property type="match status" value="1"/>
</dbReference>
<dbReference type="PROSITE" id="PS01150">
    <property type="entry name" value="COMPLEX1_20K"/>
    <property type="match status" value="1"/>
</dbReference>
<reference key="1">
    <citation type="submission" date="2005-08" db="EMBL/GenBank/DDBJ databases">
        <title>Complete sequence of chromosome 1 of Nitrosospira multiformis ATCC 25196.</title>
        <authorList>
            <person name="Copeland A."/>
            <person name="Lucas S."/>
            <person name="Lapidus A."/>
            <person name="Barry K."/>
            <person name="Detter J.C."/>
            <person name="Glavina T."/>
            <person name="Hammon N."/>
            <person name="Israni S."/>
            <person name="Pitluck S."/>
            <person name="Chain P."/>
            <person name="Malfatti S."/>
            <person name="Shin M."/>
            <person name="Vergez L."/>
            <person name="Schmutz J."/>
            <person name="Larimer F."/>
            <person name="Land M."/>
            <person name="Hauser L."/>
            <person name="Kyrpides N."/>
            <person name="Lykidis A."/>
            <person name="Richardson P."/>
        </authorList>
    </citation>
    <scope>NUCLEOTIDE SEQUENCE [LARGE SCALE GENOMIC DNA]</scope>
    <source>
        <strain>ATCC 25196 / NCIMB 11849 / C 71</strain>
    </source>
</reference>
<protein>
    <recommendedName>
        <fullName evidence="1">NADH-quinone oxidoreductase subunit B 1</fullName>
        <ecNumber evidence="1">7.1.1.-</ecNumber>
    </recommendedName>
    <alternativeName>
        <fullName evidence="1">NADH dehydrogenase I subunit B 1</fullName>
    </alternativeName>
    <alternativeName>
        <fullName evidence="1">NDH-1 subunit B 1</fullName>
    </alternativeName>
</protein>
<name>NUOB1_NITMU</name>
<comment type="function">
    <text evidence="1">NDH-1 shuttles electrons from NADH, via FMN and iron-sulfur (Fe-S) centers, to quinones in the respiratory chain. The immediate electron acceptor for the enzyme in this species is believed to be ubiquinone. Couples the redox reaction to proton translocation (for every two electrons transferred, four hydrogen ions are translocated across the cytoplasmic membrane), and thus conserves the redox energy in a proton gradient.</text>
</comment>
<comment type="catalytic activity">
    <reaction evidence="1">
        <text>a quinone + NADH + 5 H(+)(in) = a quinol + NAD(+) + 4 H(+)(out)</text>
        <dbReference type="Rhea" id="RHEA:57888"/>
        <dbReference type="ChEBI" id="CHEBI:15378"/>
        <dbReference type="ChEBI" id="CHEBI:24646"/>
        <dbReference type="ChEBI" id="CHEBI:57540"/>
        <dbReference type="ChEBI" id="CHEBI:57945"/>
        <dbReference type="ChEBI" id="CHEBI:132124"/>
    </reaction>
</comment>
<comment type="cofactor">
    <cofactor evidence="1">
        <name>[4Fe-4S] cluster</name>
        <dbReference type="ChEBI" id="CHEBI:49883"/>
    </cofactor>
    <text evidence="1">Binds 1 [4Fe-4S] cluster.</text>
</comment>
<comment type="subunit">
    <text evidence="1">NDH-1 is composed of 14 different subunits. Subunits NuoB, C, D, E, F, and G constitute the peripheral sector of the complex.</text>
</comment>
<comment type="subcellular location">
    <subcellularLocation>
        <location evidence="1">Cell inner membrane</location>
        <topology evidence="1">Peripheral membrane protein</topology>
        <orientation evidence="1">Cytoplasmic side</orientation>
    </subcellularLocation>
</comment>
<comment type="similarity">
    <text evidence="1">Belongs to the complex I 20 kDa subunit family.</text>
</comment>
<keyword id="KW-0004">4Fe-4S</keyword>
<keyword id="KW-0997">Cell inner membrane</keyword>
<keyword id="KW-1003">Cell membrane</keyword>
<keyword id="KW-0408">Iron</keyword>
<keyword id="KW-0411">Iron-sulfur</keyword>
<keyword id="KW-0472">Membrane</keyword>
<keyword id="KW-0479">Metal-binding</keyword>
<keyword id="KW-0520">NAD</keyword>
<keyword id="KW-0874">Quinone</keyword>
<keyword id="KW-1185">Reference proteome</keyword>
<keyword id="KW-1278">Translocase</keyword>
<keyword id="KW-0813">Transport</keyword>
<keyword id="KW-0830">Ubiquinone</keyword>
<evidence type="ECO:0000255" key="1">
    <source>
        <dbReference type="HAMAP-Rule" id="MF_01356"/>
    </source>
</evidence>
<evidence type="ECO:0000256" key="2">
    <source>
        <dbReference type="SAM" id="MobiDB-lite"/>
    </source>
</evidence>
<organism>
    <name type="scientific">Nitrosospira multiformis (strain ATCC 25196 / NCIMB 11849 / C 71)</name>
    <dbReference type="NCBI Taxonomy" id="323848"/>
    <lineage>
        <taxon>Bacteria</taxon>
        <taxon>Pseudomonadati</taxon>
        <taxon>Pseudomonadota</taxon>
        <taxon>Betaproteobacteria</taxon>
        <taxon>Nitrosomonadales</taxon>
        <taxon>Nitrosomonadaceae</taxon>
        <taxon>Nitrosospira</taxon>
    </lineage>
</organism>